<name>RSMG_STRGC</name>
<proteinExistence type="inferred from homology"/>
<feature type="chain" id="PRO_1000075238" description="Ribosomal RNA small subunit methyltransferase G">
    <location>
        <begin position="1"/>
        <end position="237"/>
    </location>
</feature>
<feature type="region of interest" description="Disordered" evidence="2">
    <location>
        <begin position="218"/>
        <end position="237"/>
    </location>
</feature>
<feature type="binding site" evidence="1">
    <location>
        <position position="78"/>
    </location>
    <ligand>
        <name>S-adenosyl-L-methionine</name>
        <dbReference type="ChEBI" id="CHEBI:59789"/>
    </ligand>
</feature>
<feature type="binding site" evidence="1">
    <location>
        <position position="83"/>
    </location>
    <ligand>
        <name>S-adenosyl-L-methionine</name>
        <dbReference type="ChEBI" id="CHEBI:59789"/>
    </ligand>
</feature>
<feature type="binding site" evidence="1">
    <location>
        <begin position="129"/>
        <end position="130"/>
    </location>
    <ligand>
        <name>S-adenosyl-L-methionine</name>
        <dbReference type="ChEBI" id="CHEBI:59789"/>
    </ligand>
</feature>
<feature type="binding site" evidence="1">
    <location>
        <position position="148"/>
    </location>
    <ligand>
        <name>S-adenosyl-L-methionine</name>
        <dbReference type="ChEBI" id="CHEBI:59789"/>
    </ligand>
</feature>
<comment type="function">
    <text evidence="1">Specifically methylates the N7 position of a guanine in 16S rRNA.</text>
</comment>
<comment type="subcellular location">
    <subcellularLocation>
        <location evidence="1">Cytoplasm</location>
    </subcellularLocation>
</comment>
<comment type="similarity">
    <text evidence="1">Belongs to the methyltransferase superfamily. RNA methyltransferase RsmG family.</text>
</comment>
<keyword id="KW-0963">Cytoplasm</keyword>
<keyword id="KW-0489">Methyltransferase</keyword>
<keyword id="KW-1185">Reference proteome</keyword>
<keyword id="KW-0698">rRNA processing</keyword>
<keyword id="KW-0949">S-adenosyl-L-methionine</keyword>
<keyword id="KW-0808">Transferase</keyword>
<evidence type="ECO:0000255" key="1">
    <source>
        <dbReference type="HAMAP-Rule" id="MF_00074"/>
    </source>
</evidence>
<evidence type="ECO:0000256" key="2">
    <source>
        <dbReference type="SAM" id="MobiDB-lite"/>
    </source>
</evidence>
<protein>
    <recommendedName>
        <fullName evidence="1">Ribosomal RNA small subunit methyltransferase G</fullName>
        <ecNumber evidence="1">2.1.1.-</ecNumber>
    </recommendedName>
    <alternativeName>
        <fullName evidence="1">16S rRNA 7-methylguanosine methyltransferase</fullName>
        <shortName evidence="1">16S rRNA m7G methyltransferase</shortName>
    </alternativeName>
</protein>
<gene>
    <name evidence="1" type="primary">rsmG</name>
    <name type="ordered locus">SGO_0491</name>
</gene>
<accession>A8AVJ7</accession>
<dbReference type="EC" id="2.1.1.-" evidence="1"/>
<dbReference type="EMBL" id="CP000725">
    <property type="protein sequence ID" value="ABV10542.1"/>
    <property type="molecule type" value="Genomic_DNA"/>
</dbReference>
<dbReference type="RefSeq" id="WP_011999997.1">
    <property type="nucleotide sequence ID" value="NC_009785.1"/>
</dbReference>
<dbReference type="SMR" id="A8AVJ7"/>
<dbReference type="STRING" id="467705.SGO_0491"/>
<dbReference type="KEGG" id="sgo:SGO_0491"/>
<dbReference type="eggNOG" id="COG0357">
    <property type="taxonomic scope" value="Bacteria"/>
</dbReference>
<dbReference type="HOGENOM" id="CLU_065341_0_2_9"/>
<dbReference type="Proteomes" id="UP000001131">
    <property type="component" value="Chromosome"/>
</dbReference>
<dbReference type="GO" id="GO:0005829">
    <property type="term" value="C:cytosol"/>
    <property type="evidence" value="ECO:0007669"/>
    <property type="project" value="TreeGrafter"/>
</dbReference>
<dbReference type="GO" id="GO:0070043">
    <property type="term" value="F:rRNA (guanine-N7-)-methyltransferase activity"/>
    <property type="evidence" value="ECO:0007669"/>
    <property type="project" value="UniProtKB-UniRule"/>
</dbReference>
<dbReference type="CDD" id="cd02440">
    <property type="entry name" value="AdoMet_MTases"/>
    <property type="match status" value="1"/>
</dbReference>
<dbReference type="FunFam" id="3.40.50.150:FF:000041">
    <property type="entry name" value="Ribosomal RNA small subunit methyltransferase G"/>
    <property type="match status" value="1"/>
</dbReference>
<dbReference type="Gene3D" id="3.40.50.150">
    <property type="entry name" value="Vaccinia Virus protein VP39"/>
    <property type="match status" value="1"/>
</dbReference>
<dbReference type="HAMAP" id="MF_00074">
    <property type="entry name" value="16SrRNA_methyltr_G"/>
    <property type="match status" value="1"/>
</dbReference>
<dbReference type="InterPro" id="IPR003682">
    <property type="entry name" value="rRNA_ssu_MeTfrase_G"/>
</dbReference>
<dbReference type="InterPro" id="IPR029063">
    <property type="entry name" value="SAM-dependent_MTases_sf"/>
</dbReference>
<dbReference type="NCBIfam" id="TIGR00138">
    <property type="entry name" value="rsmG_gidB"/>
    <property type="match status" value="1"/>
</dbReference>
<dbReference type="PANTHER" id="PTHR31760">
    <property type="entry name" value="S-ADENOSYL-L-METHIONINE-DEPENDENT METHYLTRANSFERASES SUPERFAMILY PROTEIN"/>
    <property type="match status" value="1"/>
</dbReference>
<dbReference type="PANTHER" id="PTHR31760:SF0">
    <property type="entry name" value="S-ADENOSYL-L-METHIONINE-DEPENDENT METHYLTRANSFERASES SUPERFAMILY PROTEIN"/>
    <property type="match status" value="1"/>
</dbReference>
<dbReference type="Pfam" id="PF02527">
    <property type="entry name" value="GidB"/>
    <property type="match status" value="1"/>
</dbReference>
<dbReference type="PIRSF" id="PIRSF003078">
    <property type="entry name" value="GidB"/>
    <property type="match status" value="1"/>
</dbReference>
<dbReference type="SUPFAM" id="SSF53335">
    <property type="entry name" value="S-adenosyl-L-methionine-dependent methyltransferases"/>
    <property type="match status" value="1"/>
</dbReference>
<organism>
    <name type="scientific">Streptococcus gordonii (strain Challis / ATCC 35105 / BCRC 15272 / CH1 / DL1 / V288)</name>
    <dbReference type="NCBI Taxonomy" id="467705"/>
    <lineage>
        <taxon>Bacteria</taxon>
        <taxon>Bacillati</taxon>
        <taxon>Bacillota</taxon>
        <taxon>Bacilli</taxon>
        <taxon>Lactobacillales</taxon>
        <taxon>Streptococcaceae</taxon>
        <taxon>Streptococcus</taxon>
    </lineage>
</organism>
<reference key="1">
    <citation type="journal article" date="2007" name="J. Bacteriol.">
        <title>Genome-wide transcriptional changes in Streptococcus gordonii in response to competence signaling peptide.</title>
        <authorList>
            <person name="Vickerman M.M."/>
            <person name="Iobst S."/>
            <person name="Jesionowski A.M."/>
            <person name="Gill S.R."/>
        </authorList>
    </citation>
    <scope>NUCLEOTIDE SEQUENCE [LARGE SCALE GENOMIC DNA]</scope>
    <source>
        <strain>Challis / ATCC 35105 / BCRC 15272 / CH1 / DL1 / V288</strain>
    </source>
</reference>
<sequence length="237" mass="27092">MTPQEFYQLLSQQGIELTDRQKDQFERYFELLVEWNEKINLTAITEKNEVYLKHFYDSIAPVLQGLIDNQDHKLLDIGAGAGFPSLPMKIIYPQLDVTIIDSLNKRINFLKLLAEELGLDKVHFYHGRAEDFAQDKAFRAQFDLVTARAVARMQVLSELTIPYLKVGGKLLALKASNAPEELEEAKNALNLLFSKVQDNLSYALPNGDPRFITVVEKKKETPNKYPRKAGMPNKRPL</sequence>